<reference key="1">
    <citation type="journal article" date="1987" name="Proc. Natl. Acad. Sci. U.S.A.">
        <title>Isolation, DNA sequence, and regulation of a meiosis-specific eukaryotic recombination gene.</title>
        <authorList>
            <person name="Atcheson C.L."/>
            <person name="Didomenico B."/>
            <person name="Frackman S."/>
            <person name="Esposito R.E."/>
            <person name="Elder R.T."/>
        </authorList>
    </citation>
    <scope>NUCLEOTIDE SEQUENCE [GENOMIC DNA]</scope>
</reference>
<reference key="2">
    <citation type="journal article" date="1994" name="Science">
        <title>Complete nucleotide sequence of Saccharomyces cerevisiae chromosome VIII.</title>
        <authorList>
            <person name="Johnston M."/>
            <person name="Andrews S."/>
            <person name="Brinkman R."/>
            <person name="Cooper J."/>
            <person name="Ding H."/>
            <person name="Dover J."/>
            <person name="Du Z."/>
            <person name="Favello A."/>
            <person name="Fulton L."/>
            <person name="Gattung S."/>
            <person name="Geisel C."/>
            <person name="Kirsten J."/>
            <person name="Kucaba T."/>
            <person name="Hillier L.W."/>
            <person name="Jier M."/>
            <person name="Johnston L."/>
            <person name="Langston Y."/>
            <person name="Latreille P."/>
            <person name="Louis E.J."/>
            <person name="Macri C."/>
            <person name="Mardis E."/>
            <person name="Menezes S."/>
            <person name="Mouser L."/>
            <person name="Nhan M."/>
            <person name="Rifkin L."/>
            <person name="Riles L."/>
            <person name="St Peter H."/>
            <person name="Trevaskis E."/>
            <person name="Vaughan K."/>
            <person name="Vignati D."/>
            <person name="Wilcox L."/>
            <person name="Wohldman P."/>
            <person name="Waterston R."/>
            <person name="Wilson R."/>
            <person name="Vaudin M."/>
        </authorList>
    </citation>
    <scope>NUCLEOTIDE SEQUENCE [LARGE SCALE GENOMIC DNA]</scope>
    <source>
        <strain>ATCC 204508 / S288c</strain>
    </source>
</reference>
<reference key="3">
    <citation type="journal article" date="2014" name="G3 (Bethesda)">
        <title>The reference genome sequence of Saccharomyces cerevisiae: Then and now.</title>
        <authorList>
            <person name="Engel S.R."/>
            <person name="Dietrich F.S."/>
            <person name="Fisk D.G."/>
            <person name="Binkley G."/>
            <person name="Balakrishnan R."/>
            <person name="Costanzo M.C."/>
            <person name="Dwight S.S."/>
            <person name="Hitz B.C."/>
            <person name="Karra K."/>
            <person name="Nash R.S."/>
            <person name="Weng S."/>
            <person name="Wong E.D."/>
            <person name="Lloyd P."/>
            <person name="Skrzypek M.S."/>
            <person name="Miyasato S.R."/>
            <person name="Simison M."/>
            <person name="Cherry J.M."/>
        </authorList>
    </citation>
    <scope>GENOME REANNOTATION</scope>
    <source>
        <strain>ATCC 204508 / S288c</strain>
    </source>
</reference>
<reference key="4">
    <citation type="journal article" date="2007" name="Genome Res.">
        <title>Approaching a complete repository of sequence-verified protein-encoding clones for Saccharomyces cerevisiae.</title>
        <authorList>
            <person name="Hu Y."/>
            <person name="Rolfs A."/>
            <person name="Bhullar B."/>
            <person name="Murthy T.V.S."/>
            <person name="Zhu C."/>
            <person name="Berger M.F."/>
            <person name="Camargo A.A."/>
            <person name="Kelley F."/>
            <person name="McCarron S."/>
            <person name="Jepson D."/>
            <person name="Richardson A."/>
            <person name="Raphael J."/>
            <person name="Moreira D."/>
            <person name="Taycher E."/>
            <person name="Zuo D."/>
            <person name="Mohr S."/>
            <person name="Kane M.F."/>
            <person name="Williamson J."/>
            <person name="Simpson A.J.G."/>
            <person name="Bulyk M.L."/>
            <person name="Harlow E."/>
            <person name="Marsischky G."/>
            <person name="Kolodner R.D."/>
            <person name="LaBaer J."/>
        </authorList>
    </citation>
    <scope>NUCLEOTIDE SEQUENCE [GENOMIC DNA]</scope>
    <source>
        <strain>ATCC 204508 / S288c</strain>
    </source>
</reference>
<reference key="5">
    <citation type="journal article" date="1997" name="Cell">
        <title>Meiosis-specific DNA double-strand breaks are catalyzed by Spo11, a member of a widely conserved protein family.</title>
        <authorList>
            <person name="Keeney S."/>
            <person name="Giroux C.N."/>
            <person name="Kleckner N."/>
        </authorList>
    </citation>
    <scope>PROTEIN SEQUENCE OF 247-258; 323-334 AND 338-344</scope>
    <scope>FUNCTION</scope>
    <scope>SUBCELLULAR LOCATION</scope>
</reference>
<reference key="6">
    <citation type="journal article" date="1997" name="Nature">
        <title>An atypical topoisomerase II from Archaea with implications for meiotic recombination.</title>
        <authorList>
            <person name="Bergerat A."/>
            <person name="de Massy B."/>
            <person name="Gadelle D."/>
            <person name="Varoutas P.-C."/>
            <person name="Nicolas A."/>
            <person name="Forterre P."/>
        </authorList>
    </citation>
    <scope>POSSIBLE FUNCTION</scope>
    <scope>MUTAGENESIS OF TYR-135</scope>
</reference>
<reference key="7">
    <citation type="journal article" date="1994" name="Genes Dev.">
        <title>Large-scale analysis of gene expression, protein localization, and gene disruption in Saccharomyces cerevisiae.</title>
        <authorList>
            <person name="Burns N."/>
            <person name="Grimwade B."/>
            <person name="Ross-Macdonald P.B."/>
            <person name="Choi E.Y."/>
            <person name="Finberg K."/>
            <person name="Roeder G.S."/>
            <person name="Snyder M."/>
        </authorList>
    </citation>
    <scope>SUBCELLULAR LOCATION</scope>
</reference>
<reference key="8">
    <citation type="journal article" date="2002" name="Mol. Cell">
        <title>Wild-type levels of Spo11-induced DSBs are required for normal single-strand resection during meiosis.</title>
        <authorList>
            <person name="Neale M.J."/>
            <person name="Ramachandran M."/>
            <person name="Trelles-Sticken E."/>
            <person name="Scherthan H."/>
            <person name="Goldman A.S."/>
        </authorList>
    </citation>
    <scope>FUNCTION</scope>
</reference>
<proteinExistence type="evidence at protein level"/>
<dbReference type="EC" id="5.6.2.2" evidence="7"/>
<dbReference type="EMBL" id="J02987">
    <property type="protein sequence ID" value="AAA65532.1"/>
    <property type="molecule type" value="Genomic_DNA"/>
</dbReference>
<dbReference type="EMBL" id="U11582">
    <property type="protein sequence ID" value="AAB65075.1"/>
    <property type="molecule type" value="Genomic_DNA"/>
</dbReference>
<dbReference type="EMBL" id="AY557836">
    <property type="protein sequence ID" value="AAS56162.1"/>
    <property type="molecule type" value="Genomic_DNA"/>
</dbReference>
<dbReference type="EMBL" id="BK006934">
    <property type="protein sequence ID" value="DAA06663.1"/>
    <property type="molecule type" value="Genomic_DNA"/>
</dbReference>
<dbReference type="PIR" id="S05854">
    <property type="entry name" value="BWBY11"/>
</dbReference>
<dbReference type="RefSeq" id="NP_011841.1">
    <property type="nucleotide sequence ID" value="NM_001179102.1"/>
</dbReference>
<dbReference type="PDB" id="8URQ">
    <property type="method" value="EM"/>
    <property type="resolution" value="3.30 A"/>
    <property type="chains" value="A=1-398"/>
</dbReference>
<dbReference type="PDB" id="8URU">
    <property type="method" value="EM"/>
    <property type="resolution" value="3.70 A"/>
    <property type="chains" value="A=1-398"/>
</dbReference>
<dbReference type="PDBsum" id="8URQ"/>
<dbReference type="PDBsum" id="8URU"/>
<dbReference type="EMDB" id="EMD-42497"/>
<dbReference type="EMDB" id="EMD-42501"/>
<dbReference type="SMR" id="P23179"/>
<dbReference type="BioGRID" id="36401">
    <property type="interactions" value="139"/>
</dbReference>
<dbReference type="DIP" id="DIP-1652N"/>
<dbReference type="FunCoup" id="P23179">
    <property type="interactions" value="1056"/>
</dbReference>
<dbReference type="IntAct" id="P23179">
    <property type="interactions" value="5"/>
</dbReference>
<dbReference type="MINT" id="P23179"/>
<dbReference type="STRING" id="4932.YHL022C"/>
<dbReference type="PaxDb" id="4932-YHL022C"/>
<dbReference type="PeptideAtlas" id="P23179"/>
<dbReference type="EnsemblFungi" id="YHL022C_mRNA">
    <property type="protein sequence ID" value="YHL022C"/>
    <property type="gene ID" value="YHL022C"/>
</dbReference>
<dbReference type="GeneID" id="856364"/>
<dbReference type="KEGG" id="sce:YHL022C"/>
<dbReference type="AGR" id="SGD:S000001014"/>
<dbReference type="SGD" id="S000001014">
    <property type="gene designation" value="SPO11"/>
</dbReference>
<dbReference type="VEuPathDB" id="FungiDB:YHL022C"/>
<dbReference type="eggNOG" id="KOG2795">
    <property type="taxonomic scope" value="Eukaryota"/>
</dbReference>
<dbReference type="GeneTree" id="ENSGT00390000001787"/>
<dbReference type="HOGENOM" id="CLU_037229_2_1_1"/>
<dbReference type="InParanoid" id="P23179"/>
<dbReference type="OMA" id="YICTMAN"/>
<dbReference type="OrthoDB" id="5377392at2759"/>
<dbReference type="BioCyc" id="YEAST:G3O-31042-MONOMER"/>
<dbReference type="BioGRID-ORCS" id="856364">
    <property type="hits" value="6 hits in 10 CRISPR screens"/>
</dbReference>
<dbReference type="PRO" id="PR:P23179"/>
<dbReference type="Proteomes" id="UP000002311">
    <property type="component" value="Chromosome VIII"/>
</dbReference>
<dbReference type="RNAct" id="P23179">
    <property type="molecule type" value="protein"/>
</dbReference>
<dbReference type="GO" id="GO:0000794">
    <property type="term" value="C:condensed nuclear chromosome"/>
    <property type="evidence" value="ECO:0000314"/>
    <property type="project" value="SGD"/>
</dbReference>
<dbReference type="GO" id="GO:0000228">
    <property type="term" value="C:nuclear chromosome"/>
    <property type="evidence" value="ECO:0000318"/>
    <property type="project" value="GO_Central"/>
</dbReference>
<dbReference type="GO" id="GO:0005654">
    <property type="term" value="C:nucleoplasm"/>
    <property type="evidence" value="ECO:0000304"/>
    <property type="project" value="Reactome"/>
</dbReference>
<dbReference type="GO" id="GO:0035861">
    <property type="term" value="C:site of double-strand break"/>
    <property type="evidence" value="ECO:0000314"/>
    <property type="project" value="SGD"/>
</dbReference>
<dbReference type="GO" id="GO:0005524">
    <property type="term" value="F:ATP binding"/>
    <property type="evidence" value="ECO:0007669"/>
    <property type="project" value="InterPro"/>
</dbReference>
<dbReference type="GO" id="GO:0003682">
    <property type="term" value="F:chromatin binding"/>
    <property type="evidence" value="ECO:0000314"/>
    <property type="project" value="SGD"/>
</dbReference>
<dbReference type="GO" id="GO:0003677">
    <property type="term" value="F:DNA binding"/>
    <property type="evidence" value="ECO:0000318"/>
    <property type="project" value="GO_Central"/>
</dbReference>
<dbReference type="GO" id="GO:0045027">
    <property type="term" value="F:DNA end binding"/>
    <property type="evidence" value="ECO:0000314"/>
    <property type="project" value="SGD"/>
</dbReference>
<dbReference type="GO" id="GO:0003918">
    <property type="term" value="F:DNA topoisomerase type II (double strand cut, ATP-hydrolyzing) activity"/>
    <property type="evidence" value="ECO:0007669"/>
    <property type="project" value="UniProtKB-EC"/>
</dbReference>
<dbReference type="GO" id="GO:0046872">
    <property type="term" value="F:metal ion binding"/>
    <property type="evidence" value="ECO:0007669"/>
    <property type="project" value="UniProtKB-KW"/>
</dbReference>
<dbReference type="GO" id="GO:0007129">
    <property type="term" value="P:homologous chromosome pairing at meiosis"/>
    <property type="evidence" value="ECO:0000315"/>
    <property type="project" value="SGD"/>
</dbReference>
<dbReference type="GO" id="GO:0007127">
    <property type="term" value="P:meiosis I"/>
    <property type="evidence" value="ECO:0000314"/>
    <property type="project" value="SGD"/>
</dbReference>
<dbReference type="GO" id="GO:0042138">
    <property type="term" value="P:meiotic DNA double-strand break formation"/>
    <property type="evidence" value="ECO:0000315"/>
    <property type="project" value="SGD"/>
</dbReference>
<dbReference type="GO" id="GO:0000706">
    <property type="term" value="P:meiotic DNA double-strand break processing"/>
    <property type="evidence" value="ECO:0000318"/>
    <property type="project" value="GO_Central"/>
</dbReference>
<dbReference type="GO" id="GO:0007131">
    <property type="term" value="P:reciprocal meiotic recombination"/>
    <property type="evidence" value="ECO:0000318"/>
    <property type="project" value="GO_Central"/>
</dbReference>
<dbReference type="GO" id="GO:0030435">
    <property type="term" value="P:sporulation resulting in formation of a cellular spore"/>
    <property type="evidence" value="ECO:0007669"/>
    <property type="project" value="UniProtKB-KW"/>
</dbReference>
<dbReference type="GO" id="GO:0007130">
    <property type="term" value="P:synaptonemal complex assembly"/>
    <property type="evidence" value="ECO:0000315"/>
    <property type="project" value="SGD"/>
</dbReference>
<dbReference type="CDD" id="cd00223">
    <property type="entry name" value="TOPRIM_TopoIIB_SPO"/>
    <property type="match status" value="1"/>
</dbReference>
<dbReference type="Gene3D" id="3.40.1360.10">
    <property type="match status" value="1"/>
</dbReference>
<dbReference type="Gene3D" id="1.10.10.10">
    <property type="entry name" value="Winged helix-like DNA-binding domain superfamily/Winged helix DNA-binding domain"/>
    <property type="match status" value="1"/>
</dbReference>
<dbReference type="InterPro" id="IPR002815">
    <property type="entry name" value="Spo11/TopoVI_A"/>
</dbReference>
<dbReference type="InterPro" id="IPR013049">
    <property type="entry name" value="Spo11/TopoVI_A_N"/>
</dbReference>
<dbReference type="InterPro" id="IPR036078">
    <property type="entry name" value="Spo11/TopoVI_A_sf"/>
</dbReference>
<dbReference type="InterPro" id="IPR034136">
    <property type="entry name" value="TOPRIM_Topo6A/Spo11"/>
</dbReference>
<dbReference type="InterPro" id="IPR036388">
    <property type="entry name" value="WH-like_DNA-bd_sf"/>
</dbReference>
<dbReference type="PANTHER" id="PTHR10848">
    <property type="entry name" value="MEIOTIC RECOMBINATION PROTEIN SPO11"/>
    <property type="match status" value="1"/>
</dbReference>
<dbReference type="PANTHER" id="PTHR10848:SF0">
    <property type="entry name" value="MEIOTIC RECOMBINATION PROTEIN SPO11"/>
    <property type="match status" value="1"/>
</dbReference>
<dbReference type="Pfam" id="PF21180">
    <property type="entry name" value="TOP6A-Spo11_Toprim"/>
    <property type="match status" value="1"/>
</dbReference>
<dbReference type="Pfam" id="PF04406">
    <property type="entry name" value="TP6A_N"/>
    <property type="match status" value="1"/>
</dbReference>
<dbReference type="PRINTS" id="PR01550">
    <property type="entry name" value="TOP6AFAMILY"/>
</dbReference>
<dbReference type="SUPFAM" id="SSF56726">
    <property type="entry name" value="DNA topoisomerase IV, alpha subunit"/>
    <property type="match status" value="1"/>
</dbReference>
<dbReference type="PROSITE" id="PS52041">
    <property type="entry name" value="TOPO_IIB"/>
    <property type="match status" value="1"/>
</dbReference>
<sequence length="398" mass="45413">MALEGLRKKYKTRQELVKALTPKRRSIHLNSNGHSNGTPCSNADVLAHIKHFLSLAANSLEQHQQPISIVFQNKKKKGDTSSPDIHTTLDFPLNGPHLCTHQFKLKRCAILLNLLKVVMEKLPLGKNTTVRDIFYSNVELFQRQANVVQWLDVIRFNFKLSPRKSLNIIPAQKGLVYSPFPIDIYDNILTCENEPKMQKQTIFPGKPCLIPFFQDDAVIKLGTTSMCNIVIVEKEAVFTKLVNNYHKLSTNTMLITGKGFPDFLTRLFLKKLEQYCSKLISDCSIFTDADPYGISIALNYTHSNERNAYICTMANYKGIRITQVLAQNNEVHNKSIQLLSLNQRDYSLAKNLIASLTANSWDIATSPLKNVIIECQREIFFQKKAEMNEIDARIFEYK</sequence>
<name>SPO11_YEAST</name>
<protein>
    <recommendedName>
        <fullName>Meiosis-specific protein SPO11</fullName>
        <ecNumber evidence="7">5.6.2.2</ecNumber>
    </recommendedName>
    <alternativeName>
        <fullName>Sporulation-specific protein 11</fullName>
    </alternativeName>
</protein>
<organism>
    <name type="scientific">Saccharomyces cerevisiae (strain ATCC 204508 / S288c)</name>
    <name type="common">Baker's yeast</name>
    <dbReference type="NCBI Taxonomy" id="559292"/>
    <lineage>
        <taxon>Eukaryota</taxon>
        <taxon>Fungi</taxon>
        <taxon>Dikarya</taxon>
        <taxon>Ascomycota</taxon>
        <taxon>Saccharomycotina</taxon>
        <taxon>Saccharomycetes</taxon>
        <taxon>Saccharomycetales</taxon>
        <taxon>Saccharomycetaceae</taxon>
        <taxon>Saccharomyces</taxon>
    </lineage>
</organism>
<accession>P23179</accession>
<accession>D3DKP3</accession>
<keyword id="KW-0002">3D-structure</keyword>
<keyword id="KW-0158">Chromosome</keyword>
<keyword id="KW-0903">Direct protein sequencing</keyword>
<keyword id="KW-0238">DNA-binding</keyword>
<keyword id="KW-0413">Isomerase</keyword>
<keyword id="KW-0460">Magnesium</keyword>
<keyword id="KW-0469">Meiosis</keyword>
<keyword id="KW-0479">Metal-binding</keyword>
<keyword id="KW-0539">Nucleus</keyword>
<keyword id="KW-1185">Reference proteome</keyword>
<keyword id="KW-0749">Sporulation</keyword>
<keyword id="KW-0799">Topoisomerase</keyword>
<comment type="function">
    <text evidence="3 5">Required for meiotic recombination. Mediates DNA cleavage that forms the double-strand breaks (DSB) that initiate meiotic recombination. The action of SPO11 is important in setting off a regulatory chain of events encompassing 5' to 3' resection. When there are no SPO11-DSBs, resection of a site specific VDE-DSB takes place but it is faster than in wild-type meiosis and increases the risk of uncovering flanking homology.</text>
</comment>
<comment type="catalytic activity">
    <reaction evidence="2 7">
        <text>ATP-dependent breakage, passage and rejoining of double-stranded DNA.</text>
        <dbReference type="EC" id="5.6.2.2"/>
    </reaction>
</comment>
<comment type="cofactor">
    <cofactor evidence="1">
        <name>Mg(2+)</name>
        <dbReference type="ChEBI" id="CHEBI:18420"/>
    </cofactor>
</comment>
<comment type="interaction">
    <interactant intactId="EBI-17705">
        <id>P23179</id>
    </interactant>
    <interactant intactId="EBI-16412992">
        <id>P33323</id>
        <label>REC104</label>
    </interactant>
    <organismsDiffer>false</organismsDiffer>
    <experiments>7</experiments>
</comment>
<comment type="interaction">
    <interactant intactId="EBI-17705">
        <id>P23179</id>
    </interactant>
    <interactant intactId="EBI-17260">
        <id>Q02793</id>
        <label>SKI8</label>
    </interactant>
    <organismsDiffer>false</organismsDiffer>
    <experiments>9</experiments>
</comment>
<comment type="subcellular location">
    <subcellularLocation>
        <location evidence="4 5">Nucleus</location>
    </subcellularLocation>
    <subcellularLocation>
        <location evidence="5">Chromosome</location>
    </subcellularLocation>
</comment>
<comment type="developmental stage">
    <text>Meiosis-specific.</text>
</comment>
<comment type="similarity">
    <text evidence="7">Belongs to the TOP6A family.</text>
</comment>
<feature type="chain" id="PRO_0000145473" description="Meiosis-specific protein SPO11">
    <location>
        <begin position="1"/>
        <end position="398"/>
    </location>
</feature>
<feature type="domain" description="Topo IIA-type catalytic" evidence="2">
    <location>
        <begin position="40"/>
        <end position="175"/>
    </location>
</feature>
<feature type="active site" description="O-(5'-phospho-DNA)-tyrosine intermediate" evidence="2 8">
    <location>
        <position position="135"/>
    </location>
</feature>
<feature type="binding site" evidence="1">
    <location>
        <position position="233"/>
    </location>
    <ligand>
        <name>Mg(2+)</name>
        <dbReference type="ChEBI" id="CHEBI:18420"/>
    </ligand>
</feature>
<feature type="binding site" evidence="1">
    <location>
        <position position="288"/>
    </location>
    <ligand>
        <name>Mg(2+)</name>
        <dbReference type="ChEBI" id="CHEBI:18420"/>
    </ligand>
</feature>
<feature type="mutagenesis site" description="Loss of activity." evidence="6">
    <original>Y</original>
    <variation>F</variation>
    <location>
        <position position="135"/>
    </location>
</feature>
<feature type="turn" evidence="9">
    <location>
        <begin position="4"/>
        <end position="6"/>
    </location>
</feature>
<feature type="strand" evidence="9">
    <location>
        <begin position="7"/>
        <end position="9"/>
    </location>
</feature>
<feature type="turn" evidence="9">
    <location>
        <begin position="14"/>
        <end position="19"/>
    </location>
</feature>
<feature type="strand" evidence="9">
    <location>
        <begin position="25"/>
        <end position="29"/>
    </location>
</feature>
<feature type="helix" evidence="9">
    <location>
        <begin position="42"/>
        <end position="61"/>
    </location>
</feature>
<feature type="strand" evidence="9">
    <location>
        <begin position="67"/>
        <end position="70"/>
    </location>
</feature>
<feature type="strand" evidence="9">
    <location>
        <begin position="88"/>
        <end position="90"/>
    </location>
</feature>
<feature type="helix" evidence="9">
    <location>
        <begin position="105"/>
        <end position="121"/>
    </location>
</feature>
<feature type="turn" evidence="9">
    <location>
        <begin position="122"/>
        <end position="125"/>
    </location>
</feature>
<feature type="helix" evidence="9">
    <location>
        <begin position="130"/>
        <end position="136"/>
    </location>
</feature>
<feature type="helix" evidence="9">
    <location>
        <begin position="138"/>
        <end position="141"/>
    </location>
</feature>
<feature type="helix" evidence="9">
    <location>
        <begin position="144"/>
        <end position="154"/>
    </location>
</feature>
<feature type="helix" evidence="9">
    <location>
        <begin position="156"/>
        <end position="158"/>
    </location>
</feature>
<feature type="strand" evidence="9">
    <location>
        <begin position="162"/>
        <end position="164"/>
    </location>
</feature>
<feature type="strand" evidence="9">
    <location>
        <begin position="166"/>
        <end position="169"/>
    </location>
</feature>
<feature type="strand" evidence="9">
    <location>
        <begin position="229"/>
        <end position="231"/>
    </location>
</feature>
<feature type="helix" evidence="9">
    <location>
        <begin position="236"/>
        <end position="244"/>
    </location>
</feature>
<feature type="strand" evidence="9">
    <location>
        <begin position="258"/>
        <end position="260"/>
    </location>
</feature>
<feature type="helix" evidence="9">
    <location>
        <begin position="263"/>
        <end position="276"/>
    </location>
</feature>
<feature type="turn" evidence="9">
    <location>
        <begin position="277"/>
        <end position="279"/>
    </location>
</feature>
<feature type="helix" evidence="9">
    <location>
        <begin position="293"/>
        <end position="301"/>
    </location>
</feature>
<feature type="helix" evidence="9">
    <location>
        <begin position="321"/>
        <end position="327"/>
    </location>
</feature>
<feature type="turn" evidence="9">
    <location>
        <begin position="343"/>
        <end position="349"/>
    </location>
</feature>
<feature type="helix" evidence="9">
    <location>
        <begin position="351"/>
        <end position="354"/>
    </location>
</feature>
<feature type="strand" evidence="9">
    <location>
        <begin position="357"/>
        <end position="359"/>
    </location>
</feature>
<feature type="strand" evidence="9">
    <location>
        <begin position="363"/>
        <end position="365"/>
    </location>
</feature>
<feature type="helix" evidence="9">
    <location>
        <begin position="369"/>
        <end position="381"/>
    </location>
</feature>
<feature type="strand" evidence="9">
    <location>
        <begin position="387"/>
        <end position="389"/>
    </location>
</feature>
<evidence type="ECO:0000250" key="1">
    <source>
        <dbReference type="UniProtKB" id="Q57815"/>
    </source>
</evidence>
<evidence type="ECO:0000255" key="2">
    <source>
        <dbReference type="PROSITE-ProRule" id="PRU01385"/>
    </source>
</evidence>
<evidence type="ECO:0000269" key="3">
    <source>
    </source>
</evidence>
<evidence type="ECO:0000269" key="4">
    <source>
    </source>
</evidence>
<evidence type="ECO:0000269" key="5">
    <source>
    </source>
</evidence>
<evidence type="ECO:0000269" key="6">
    <source>
    </source>
</evidence>
<evidence type="ECO:0000305" key="7"/>
<evidence type="ECO:0000305" key="8">
    <source>
    </source>
</evidence>
<evidence type="ECO:0007829" key="9">
    <source>
        <dbReference type="PDB" id="8URQ"/>
    </source>
</evidence>
<gene>
    <name type="primary">SPO11</name>
    <name type="ordered locus">YHL022C</name>
</gene>